<accession>Q17W61</accession>
<comment type="function">
    <text evidence="1">Tetrapolymerization of the monopyrrole PBG into the hydroxymethylbilane pre-uroporphyrinogen in several discrete steps.</text>
</comment>
<comment type="catalytic activity">
    <reaction evidence="1">
        <text>4 porphobilinogen + H2O = hydroxymethylbilane + 4 NH4(+)</text>
        <dbReference type="Rhea" id="RHEA:13185"/>
        <dbReference type="ChEBI" id="CHEBI:15377"/>
        <dbReference type="ChEBI" id="CHEBI:28938"/>
        <dbReference type="ChEBI" id="CHEBI:57845"/>
        <dbReference type="ChEBI" id="CHEBI:58126"/>
        <dbReference type="EC" id="2.5.1.61"/>
    </reaction>
</comment>
<comment type="cofactor">
    <cofactor evidence="1">
        <name>dipyrromethane</name>
        <dbReference type="ChEBI" id="CHEBI:60342"/>
    </cofactor>
    <text evidence="1">Binds 1 dipyrromethane group covalently.</text>
</comment>
<comment type="pathway">
    <text evidence="1">Porphyrin-containing compound metabolism; protoporphyrin-IX biosynthesis; coproporphyrinogen-III from 5-aminolevulinate: step 2/4.</text>
</comment>
<comment type="subunit">
    <text evidence="1">Monomer.</text>
</comment>
<comment type="miscellaneous">
    <text evidence="1">The porphobilinogen subunits are added to the dipyrromethane group.</text>
</comment>
<comment type="similarity">
    <text evidence="1">Belongs to the HMBS family.</text>
</comment>
<proteinExistence type="inferred from homology"/>
<gene>
    <name evidence="1" type="primary">hemC</name>
    <name type="ordered locus">Hac_1381</name>
</gene>
<organism>
    <name type="scientific">Helicobacter acinonychis (strain Sheeba)</name>
    <dbReference type="NCBI Taxonomy" id="382638"/>
    <lineage>
        <taxon>Bacteria</taxon>
        <taxon>Pseudomonadati</taxon>
        <taxon>Campylobacterota</taxon>
        <taxon>Epsilonproteobacteria</taxon>
        <taxon>Campylobacterales</taxon>
        <taxon>Helicobacteraceae</taxon>
        <taxon>Helicobacter</taxon>
    </lineage>
</organism>
<evidence type="ECO:0000255" key="1">
    <source>
        <dbReference type="HAMAP-Rule" id="MF_00260"/>
    </source>
</evidence>
<dbReference type="EC" id="2.5.1.61" evidence="1"/>
<dbReference type="EMBL" id="AM260522">
    <property type="protein sequence ID" value="CAK00115.1"/>
    <property type="molecule type" value="Genomic_DNA"/>
</dbReference>
<dbReference type="RefSeq" id="WP_011578205.1">
    <property type="nucleotide sequence ID" value="NC_008229.1"/>
</dbReference>
<dbReference type="SMR" id="Q17W61"/>
<dbReference type="STRING" id="382638.Hac_1381"/>
<dbReference type="GeneID" id="31758686"/>
<dbReference type="KEGG" id="hac:Hac_1381"/>
<dbReference type="eggNOG" id="COG0181">
    <property type="taxonomic scope" value="Bacteria"/>
</dbReference>
<dbReference type="HOGENOM" id="CLU_019704_0_2_7"/>
<dbReference type="OrthoDB" id="9810298at2"/>
<dbReference type="BioCyc" id="HACI382638:HAC_RS05905-MONOMER"/>
<dbReference type="UniPathway" id="UPA00251">
    <property type="reaction ID" value="UER00319"/>
</dbReference>
<dbReference type="Proteomes" id="UP000000775">
    <property type="component" value="Chromosome"/>
</dbReference>
<dbReference type="GO" id="GO:0005737">
    <property type="term" value="C:cytoplasm"/>
    <property type="evidence" value="ECO:0007669"/>
    <property type="project" value="TreeGrafter"/>
</dbReference>
<dbReference type="GO" id="GO:0004418">
    <property type="term" value="F:hydroxymethylbilane synthase activity"/>
    <property type="evidence" value="ECO:0007669"/>
    <property type="project" value="UniProtKB-UniRule"/>
</dbReference>
<dbReference type="GO" id="GO:0006782">
    <property type="term" value="P:protoporphyrinogen IX biosynthetic process"/>
    <property type="evidence" value="ECO:0007669"/>
    <property type="project" value="UniProtKB-UniRule"/>
</dbReference>
<dbReference type="CDD" id="cd13646">
    <property type="entry name" value="PBP2_EcHMBS_like"/>
    <property type="match status" value="1"/>
</dbReference>
<dbReference type="FunFam" id="3.40.190.10:FF:000004">
    <property type="entry name" value="Porphobilinogen deaminase"/>
    <property type="match status" value="1"/>
</dbReference>
<dbReference type="FunFam" id="3.40.190.10:FF:000005">
    <property type="entry name" value="Porphobilinogen deaminase"/>
    <property type="match status" value="1"/>
</dbReference>
<dbReference type="Gene3D" id="3.40.190.10">
    <property type="entry name" value="Periplasmic binding protein-like II"/>
    <property type="match status" value="2"/>
</dbReference>
<dbReference type="Gene3D" id="3.30.160.40">
    <property type="entry name" value="Porphobilinogen deaminase, C-terminal domain"/>
    <property type="match status" value="1"/>
</dbReference>
<dbReference type="HAMAP" id="MF_00260">
    <property type="entry name" value="Porphobil_deam"/>
    <property type="match status" value="1"/>
</dbReference>
<dbReference type="InterPro" id="IPR000860">
    <property type="entry name" value="HemC"/>
</dbReference>
<dbReference type="InterPro" id="IPR022419">
    <property type="entry name" value="Porphobilin_deaminase_cofac_BS"/>
</dbReference>
<dbReference type="InterPro" id="IPR022417">
    <property type="entry name" value="Porphobilin_deaminase_N"/>
</dbReference>
<dbReference type="InterPro" id="IPR022418">
    <property type="entry name" value="Porphobilinogen_deaminase_C"/>
</dbReference>
<dbReference type="InterPro" id="IPR036803">
    <property type="entry name" value="Porphobilinogen_deaminase_C_sf"/>
</dbReference>
<dbReference type="NCBIfam" id="TIGR00212">
    <property type="entry name" value="hemC"/>
    <property type="match status" value="1"/>
</dbReference>
<dbReference type="PANTHER" id="PTHR11557">
    <property type="entry name" value="PORPHOBILINOGEN DEAMINASE"/>
    <property type="match status" value="1"/>
</dbReference>
<dbReference type="PANTHER" id="PTHR11557:SF0">
    <property type="entry name" value="PORPHOBILINOGEN DEAMINASE"/>
    <property type="match status" value="1"/>
</dbReference>
<dbReference type="Pfam" id="PF01379">
    <property type="entry name" value="Porphobil_deam"/>
    <property type="match status" value="1"/>
</dbReference>
<dbReference type="Pfam" id="PF03900">
    <property type="entry name" value="Porphobil_deamC"/>
    <property type="match status" value="1"/>
</dbReference>
<dbReference type="PIRSF" id="PIRSF001438">
    <property type="entry name" value="4pyrrol_synth_OHMeBilane_synth"/>
    <property type="match status" value="1"/>
</dbReference>
<dbReference type="PRINTS" id="PR00151">
    <property type="entry name" value="PORPHBDMNASE"/>
</dbReference>
<dbReference type="SUPFAM" id="SSF53850">
    <property type="entry name" value="Periplasmic binding protein-like II"/>
    <property type="match status" value="1"/>
</dbReference>
<dbReference type="SUPFAM" id="SSF54782">
    <property type="entry name" value="Porphobilinogen deaminase (hydroxymethylbilane synthase), C-terminal domain"/>
    <property type="match status" value="1"/>
</dbReference>
<dbReference type="PROSITE" id="PS00533">
    <property type="entry name" value="PORPHOBILINOGEN_DEAM"/>
    <property type="match status" value="1"/>
</dbReference>
<feature type="chain" id="PRO_0000304245" description="Porphobilinogen deaminase">
    <location>
        <begin position="1"/>
        <end position="306"/>
    </location>
</feature>
<feature type="modified residue" description="S-(dipyrrolylmethanemethyl)cysteine" evidence="1">
    <location>
        <position position="239"/>
    </location>
</feature>
<name>HEM3_HELAH</name>
<sequence>MGKLVIGSRGSELALWQANYIKERLKKECFIESEIQIVKTTGDKILDAPLNKIGGKGLFTKELEELLLKGTIDLAVHSLKDVPVVFEKGLDLACITKRADVRDTFLSTKFPDLMSLPKGAKVGTTSLRRSMQLKCKRKDLDTESLRGNVQTRLKKLESGEFDAIILAEAGLCRLNIQGAKYRKAFSVEEMIPSMGQGALGVEMLKSHKHFTALQKLNDEESAFCCHLEREFIKGLNGGCQIPVGVHASLMGEKVKIQAILGLPNGEEVIAKEKQGDKNKAFDSVQELLEAFLQSGAREILEKVQLF</sequence>
<reference key="1">
    <citation type="journal article" date="2006" name="PLoS Genet.">
        <title>Who ate whom? Adaptive Helicobacter genomic changes that accompanied a host jump from early humans to large felines.</title>
        <authorList>
            <person name="Eppinger M."/>
            <person name="Baar C."/>
            <person name="Linz B."/>
            <person name="Raddatz G."/>
            <person name="Lanz C."/>
            <person name="Keller H."/>
            <person name="Morelli G."/>
            <person name="Gressmann H."/>
            <person name="Achtman M."/>
            <person name="Schuster S.C."/>
        </authorList>
    </citation>
    <scope>NUCLEOTIDE SEQUENCE [LARGE SCALE GENOMIC DNA]</scope>
    <source>
        <strain>Sheeba</strain>
    </source>
</reference>
<protein>
    <recommendedName>
        <fullName evidence="1">Porphobilinogen deaminase</fullName>
        <shortName evidence="1">PBG</shortName>
        <ecNumber evidence="1">2.5.1.61</ecNumber>
    </recommendedName>
    <alternativeName>
        <fullName evidence="1">Hydroxymethylbilane synthase</fullName>
        <shortName evidence="1">HMBS</shortName>
    </alternativeName>
    <alternativeName>
        <fullName evidence="1">Pre-uroporphyrinogen synthase</fullName>
    </alternativeName>
</protein>
<keyword id="KW-0627">Porphyrin biosynthesis</keyword>
<keyword id="KW-0808">Transferase</keyword>